<dbReference type="EC" id="2.4.1.21" evidence="1"/>
<dbReference type="EMBL" id="CP001164">
    <property type="protein sequence ID" value="ACI39538.1"/>
    <property type="molecule type" value="Genomic_DNA"/>
</dbReference>
<dbReference type="RefSeq" id="WP_001197646.1">
    <property type="nucleotide sequence ID" value="NC_011353.1"/>
</dbReference>
<dbReference type="SMR" id="B5YUI5"/>
<dbReference type="CAZy" id="GT5">
    <property type="family name" value="Glycosyltransferase Family 5"/>
</dbReference>
<dbReference type="GeneID" id="75202274"/>
<dbReference type="KEGG" id="ecf:ECH74115_4741"/>
<dbReference type="HOGENOM" id="CLU_009583_18_2_6"/>
<dbReference type="UniPathway" id="UPA00164"/>
<dbReference type="GO" id="GO:0005829">
    <property type="term" value="C:cytosol"/>
    <property type="evidence" value="ECO:0007669"/>
    <property type="project" value="TreeGrafter"/>
</dbReference>
<dbReference type="GO" id="GO:0009011">
    <property type="term" value="F:alpha-1,4-glucan glucosyltransferase (ADP-glucose donor) activity"/>
    <property type="evidence" value="ECO:0007669"/>
    <property type="project" value="UniProtKB-UniRule"/>
</dbReference>
<dbReference type="GO" id="GO:0004373">
    <property type="term" value="F:alpha-1,4-glucan glucosyltransferase (UDP-glucose donor) activity"/>
    <property type="evidence" value="ECO:0007669"/>
    <property type="project" value="InterPro"/>
</dbReference>
<dbReference type="GO" id="GO:0005978">
    <property type="term" value="P:glycogen biosynthetic process"/>
    <property type="evidence" value="ECO:0007669"/>
    <property type="project" value="UniProtKB-UniRule"/>
</dbReference>
<dbReference type="CDD" id="cd03791">
    <property type="entry name" value="GT5_Glycogen_synthase_DULL1-like"/>
    <property type="match status" value="1"/>
</dbReference>
<dbReference type="FunFam" id="3.40.50.2000:FF:000008">
    <property type="entry name" value="Glycogen synthase"/>
    <property type="match status" value="1"/>
</dbReference>
<dbReference type="FunFam" id="3.40.50.2000:FF:000011">
    <property type="entry name" value="Glycogen synthase"/>
    <property type="match status" value="1"/>
</dbReference>
<dbReference type="Gene3D" id="3.40.50.2000">
    <property type="entry name" value="Glycogen Phosphorylase B"/>
    <property type="match status" value="2"/>
</dbReference>
<dbReference type="HAMAP" id="MF_00484">
    <property type="entry name" value="Glycogen_synth"/>
    <property type="match status" value="1"/>
</dbReference>
<dbReference type="InterPro" id="IPR001296">
    <property type="entry name" value="Glyco_trans_1"/>
</dbReference>
<dbReference type="InterPro" id="IPR011835">
    <property type="entry name" value="GS/SS"/>
</dbReference>
<dbReference type="InterPro" id="IPR013534">
    <property type="entry name" value="Starch_synth_cat_dom"/>
</dbReference>
<dbReference type="NCBIfam" id="TIGR02095">
    <property type="entry name" value="glgA"/>
    <property type="match status" value="1"/>
</dbReference>
<dbReference type="NCBIfam" id="NF001899">
    <property type="entry name" value="PRK00654.1-2"/>
    <property type="match status" value="1"/>
</dbReference>
<dbReference type="PANTHER" id="PTHR45825:SF11">
    <property type="entry name" value="ALPHA AMYLASE DOMAIN-CONTAINING PROTEIN"/>
    <property type="match status" value="1"/>
</dbReference>
<dbReference type="PANTHER" id="PTHR45825">
    <property type="entry name" value="GRANULE-BOUND STARCH SYNTHASE 1, CHLOROPLASTIC/AMYLOPLASTIC"/>
    <property type="match status" value="1"/>
</dbReference>
<dbReference type="Pfam" id="PF08323">
    <property type="entry name" value="Glyco_transf_5"/>
    <property type="match status" value="1"/>
</dbReference>
<dbReference type="Pfam" id="PF00534">
    <property type="entry name" value="Glycos_transf_1"/>
    <property type="match status" value="1"/>
</dbReference>
<dbReference type="SUPFAM" id="SSF53756">
    <property type="entry name" value="UDP-Glycosyltransferase/glycogen phosphorylase"/>
    <property type="match status" value="1"/>
</dbReference>
<name>GLGA_ECO5E</name>
<sequence length="477" mass="52822">MQVLHVCSEMFPLLKTGGLADVIGALPAAQIADGVDARVLLPAFPDIRRGVTDAQVVSRRDTFAGHITLLFGHYNGVGIYLIDAPHLYDRPGSPYHDTNLFAYTDNVLRFALLGWVGAEMASGLDPFWRPDVVHAHDWHAGLAPAYLAARGRPAKSVFTVHNLAYQGMFYAHHMNDIQLPWSFFNIHGLEFNGQISFLKAGLYYADHITAVSPTYAREITEPQFAYGMEGLLQQRHREGRLSGVLNGVDEKIWSPETDLLLASRYTRDTLEDKAENKRQLQIAMGLKVDDKVPLFAVVSRLTSQKGLDLVLEALPGLLEQGGQLALLGAGDPVLQEGFLAAAAEYPGQVGVQIGYHEAFSHRIMGGADVILVPSRFEPCGLTQLYGLKYGTLPLVRRTGGLADTVSDCSLENLADGVASGFVFEDSNAWSLLRAIRRAFVLWSRPSLWRFVQRQAMAMDFSWQVAAKSYRELYYRLK</sequence>
<comment type="function">
    <text evidence="1">Synthesizes alpha-1,4-glucan chains using ADP-glucose.</text>
</comment>
<comment type="catalytic activity">
    <reaction evidence="1">
        <text>[(1-&gt;4)-alpha-D-glucosyl](n) + ADP-alpha-D-glucose = [(1-&gt;4)-alpha-D-glucosyl](n+1) + ADP + H(+)</text>
        <dbReference type="Rhea" id="RHEA:18189"/>
        <dbReference type="Rhea" id="RHEA-COMP:9584"/>
        <dbReference type="Rhea" id="RHEA-COMP:9587"/>
        <dbReference type="ChEBI" id="CHEBI:15378"/>
        <dbReference type="ChEBI" id="CHEBI:15444"/>
        <dbReference type="ChEBI" id="CHEBI:57498"/>
        <dbReference type="ChEBI" id="CHEBI:456216"/>
        <dbReference type="EC" id="2.4.1.21"/>
    </reaction>
</comment>
<comment type="pathway">
    <text evidence="1">Glycan biosynthesis; glycogen biosynthesis.</text>
</comment>
<comment type="similarity">
    <text evidence="1">Belongs to the glycosyltransferase 1 family. Bacterial/plant glycogen synthase subfamily.</text>
</comment>
<gene>
    <name evidence="1" type="primary">glgA</name>
    <name type="ordered locus">ECH74115_4741</name>
</gene>
<feature type="chain" id="PRO_1000126066" description="Glycogen synthase">
    <location>
        <begin position="1"/>
        <end position="477"/>
    </location>
</feature>
<feature type="binding site" evidence="1">
    <location>
        <position position="15"/>
    </location>
    <ligand>
        <name>ADP-alpha-D-glucose</name>
        <dbReference type="ChEBI" id="CHEBI:57498"/>
    </ligand>
</feature>
<accession>B5YUI5</accession>
<keyword id="KW-0320">Glycogen biosynthesis</keyword>
<keyword id="KW-0328">Glycosyltransferase</keyword>
<keyword id="KW-0808">Transferase</keyword>
<organism>
    <name type="scientific">Escherichia coli O157:H7 (strain EC4115 / EHEC)</name>
    <dbReference type="NCBI Taxonomy" id="444450"/>
    <lineage>
        <taxon>Bacteria</taxon>
        <taxon>Pseudomonadati</taxon>
        <taxon>Pseudomonadota</taxon>
        <taxon>Gammaproteobacteria</taxon>
        <taxon>Enterobacterales</taxon>
        <taxon>Enterobacteriaceae</taxon>
        <taxon>Escherichia</taxon>
    </lineage>
</organism>
<evidence type="ECO:0000255" key="1">
    <source>
        <dbReference type="HAMAP-Rule" id="MF_00484"/>
    </source>
</evidence>
<protein>
    <recommendedName>
        <fullName evidence="1">Glycogen synthase</fullName>
        <ecNumber evidence="1">2.4.1.21</ecNumber>
    </recommendedName>
    <alternativeName>
        <fullName evidence="1">Starch [bacterial glycogen] synthase</fullName>
    </alternativeName>
</protein>
<reference key="1">
    <citation type="journal article" date="2011" name="Proc. Natl. Acad. Sci. U.S.A.">
        <title>Genomic anatomy of Escherichia coli O157:H7 outbreaks.</title>
        <authorList>
            <person name="Eppinger M."/>
            <person name="Mammel M.K."/>
            <person name="Leclerc J.E."/>
            <person name="Ravel J."/>
            <person name="Cebula T.A."/>
        </authorList>
    </citation>
    <scope>NUCLEOTIDE SEQUENCE [LARGE SCALE GENOMIC DNA]</scope>
    <source>
        <strain>EC4115 / EHEC</strain>
    </source>
</reference>
<proteinExistence type="inferred from homology"/>